<evidence type="ECO:0000255" key="1">
    <source>
        <dbReference type="HAMAP-Rule" id="MF_00533"/>
    </source>
</evidence>
<sequence>MALRQCAIYGKGGIGKSTTTQNLVAGLAEAGNKIMIVGCDPKADSTRLILHAKAQNTIMEMAAQAGSVEDLELEDVLKAGFGGIKCVESGGPEPGVGCAGRGVITAINFLEEEGAYEEDLDFVFYDVLGDVVCGGFAMPIRQNKAQEIYIVVSGEMMAMYAANNIAKGIVKYASSGNVRLAGLICNSRNVDREDELIEALAAALGTQMIHFVPRDNVVQRAEIRRMTVIEYDPKSKQADEYRTLSNKIYNNKNFVVPTPLTMDELEDLLMKYGMMEEEDETIVGKTAEEEAAAATA</sequence>
<comment type="function">
    <text evidence="1">The key enzymatic reactions in nitrogen fixation are catalyzed by the nitrogenase complex, which has 2 components: the iron protein and the molybdenum-iron protein.</text>
</comment>
<comment type="catalytic activity">
    <reaction evidence="1">
        <text>N2 + 8 reduced [2Fe-2S]-[ferredoxin] + 16 ATP + 16 H2O = H2 + 8 oxidized [2Fe-2S]-[ferredoxin] + 2 NH4(+) + 16 ADP + 16 phosphate + 6 H(+)</text>
        <dbReference type="Rhea" id="RHEA:21448"/>
        <dbReference type="Rhea" id="RHEA-COMP:10000"/>
        <dbReference type="Rhea" id="RHEA-COMP:10001"/>
        <dbReference type="ChEBI" id="CHEBI:15377"/>
        <dbReference type="ChEBI" id="CHEBI:15378"/>
        <dbReference type="ChEBI" id="CHEBI:17997"/>
        <dbReference type="ChEBI" id="CHEBI:18276"/>
        <dbReference type="ChEBI" id="CHEBI:28938"/>
        <dbReference type="ChEBI" id="CHEBI:30616"/>
        <dbReference type="ChEBI" id="CHEBI:33737"/>
        <dbReference type="ChEBI" id="CHEBI:33738"/>
        <dbReference type="ChEBI" id="CHEBI:43474"/>
        <dbReference type="ChEBI" id="CHEBI:456216"/>
        <dbReference type="EC" id="1.18.6.1"/>
    </reaction>
</comment>
<comment type="cofactor">
    <cofactor evidence="1">
        <name>[4Fe-4S] cluster</name>
        <dbReference type="ChEBI" id="CHEBI:49883"/>
    </cofactor>
    <text evidence="1">Binds 1 [4Fe-4S] cluster per dimer.</text>
</comment>
<comment type="subunit">
    <text evidence="1">Homodimer.</text>
</comment>
<comment type="PTM">
    <text evidence="1">The reversible ADP-ribosylation of Arg-101 inactivates the nitrogenase reductase and regulates nitrogenase activity.</text>
</comment>
<comment type="similarity">
    <text evidence="1">Belongs to the NifH/BchL/ChlL family.</text>
</comment>
<dbReference type="EC" id="1.18.6.1" evidence="1"/>
<dbReference type="EMBL" id="CP000471">
    <property type="protein sequence ID" value="ABK43713.1"/>
    <property type="molecule type" value="Genomic_DNA"/>
</dbReference>
<dbReference type="RefSeq" id="WP_011712868.1">
    <property type="nucleotide sequence ID" value="NC_008576.1"/>
</dbReference>
<dbReference type="SMR" id="A0L6X0"/>
<dbReference type="STRING" id="156889.Mmc1_1202"/>
<dbReference type="KEGG" id="mgm:Mmc1_1202"/>
<dbReference type="eggNOG" id="COG1348">
    <property type="taxonomic scope" value="Bacteria"/>
</dbReference>
<dbReference type="HOGENOM" id="CLU_059373_0_0_5"/>
<dbReference type="OrthoDB" id="9778641at2"/>
<dbReference type="Proteomes" id="UP000002586">
    <property type="component" value="Chromosome"/>
</dbReference>
<dbReference type="GO" id="GO:0051539">
    <property type="term" value="F:4 iron, 4 sulfur cluster binding"/>
    <property type="evidence" value="ECO:0007669"/>
    <property type="project" value="UniProtKB-KW"/>
</dbReference>
<dbReference type="GO" id="GO:0005524">
    <property type="term" value="F:ATP binding"/>
    <property type="evidence" value="ECO:0007669"/>
    <property type="project" value="UniProtKB-UniRule"/>
</dbReference>
<dbReference type="GO" id="GO:0046872">
    <property type="term" value="F:metal ion binding"/>
    <property type="evidence" value="ECO:0007669"/>
    <property type="project" value="UniProtKB-KW"/>
</dbReference>
<dbReference type="GO" id="GO:0016163">
    <property type="term" value="F:nitrogenase activity"/>
    <property type="evidence" value="ECO:0007669"/>
    <property type="project" value="UniProtKB-UniRule"/>
</dbReference>
<dbReference type="GO" id="GO:0009399">
    <property type="term" value="P:nitrogen fixation"/>
    <property type="evidence" value="ECO:0007669"/>
    <property type="project" value="UniProtKB-UniRule"/>
</dbReference>
<dbReference type="CDD" id="cd02040">
    <property type="entry name" value="NifH"/>
    <property type="match status" value="1"/>
</dbReference>
<dbReference type="FunFam" id="3.40.50.300:FF:001379">
    <property type="entry name" value="Nitrogenase iron protein 1"/>
    <property type="match status" value="1"/>
</dbReference>
<dbReference type="Gene3D" id="3.40.50.300">
    <property type="entry name" value="P-loop containing nucleotide triphosphate hydrolases"/>
    <property type="match status" value="1"/>
</dbReference>
<dbReference type="HAMAP" id="MF_00533">
    <property type="entry name" value="NifH"/>
    <property type="match status" value="1"/>
</dbReference>
<dbReference type="InterPro" id="IPR030655">
    <property type="entry name" value="NifH/chlL_CS"/>
</dbReference>
<dbReference type="InterPro" id="IPR000392">
    <property type="entry name" value="NifH/frxC"/>
</dbReference>
<dbReference type="InterPro" id="IPR005977">
    <property type="entry name" value="Nitrogenase_Fe_NifH"/>
</dbReference>
<dbReference type="InterPro" id="IPR027417">
    <property type="entry name" value="P-loop_NTPase"/>
</dbReference>
<dbReference type="NCBIfam" id="TIGR01287">
    <property type="entry name" value="nifH"/>
    <property type="match status" value="1"/>
</dbReference>
<dbReference type="PANTHER" id="PTHR42864">
    <property type="entry name" value="LIGHT-INDEPENDENT PROTOCHLOROPHYLLIDE REDUCTASE IRON-SULFUR ATP-BINDING PROTEIN"/>
    <property type="match status" value="1"/>
</dbReference>
<dbReference type="PANTHER" id="PTHR42864:SF2">
    <property type="entry name" value="LIGHT-INDEPENDENT PROTOCHLOROPHYLLIDE REDUCTASE IRON-SULFUR ATP-BINDING PROTEIN"/>
    <property type="match status" value="1"/>
</dbReference>
<dbReference type="Pfam" id="PF00142">
    <property type="entry name" value="Fer4_NifH"/>
    <property type="match status" value="1"/>
</dbReference>
<dbReference type="PIRSF" id="PIRSF000363">
    <property type="entry name" value="Nitrogenase_iron"/>
    <property type="match status" value="1"/>
</dbReference>
<dbReference type="PRINTS" id="PR00091">
    <property type="entry name" value="NITROGNASEII"/>
</dbReference>
<dbReference type="SUPFAM" id="SSF52540">
    <property type="entry name" value="P-loop containing nucleoside triphosphate hydrolases"/>
    <property type="match status" value="1"/>
</dbReference>
<dbReference type="PROSITE" id="PS00746">
    <property type="entry name" value="NIFH_FRXC_1"/>
    <property type="match status" value="1"/>
</dbReference>
<dbReference type="PROSITE" id="PS00692">
    <property type="entry name" value="NIFH_FRXC_2"/>
    <property type="match status" value="1"/>
</dbReference>
<dbReference type="PROSITE" id="PS51026">
    <property type="entry name" value="NIFH_FRXC_3"/>
    <property type="match status" value="1"/>
</dbReference>
<reference key="1">
    <citation type="journal article" date="2009" name="Appl. Environ. Microbiol.">
        <title>Complete genome sequence of the chemolithoautotrophic marine magnetotactic coccus strain MC-1.</title>
        <authorList>
            <person name="Schubbe S."/>
            <person name="Williams T.J."/>
            <person name="Xie G."/>
            <person name="Kiss H.E."/>
            <person name="Brettin T.S."/>
            <person name="Martinez D."/>
            <person name="Ross C.A."/>
            <person name="Schuler D."/>
            <person name="Cox B.L."/>
            <person name="Nealson K.H."/>
            <person name="Bazylinski D.A."/>
        </authorList>
    </citation>
    <scope>NUCLEOTIDE SEQUENCE [LARGE SCALE GENOMIC DNA]</scope>
    <source>
        <strain>ATCC BAA-1437 / JCM 17883 / MC-1</strain>
    </source>
</reference>
<accession>A0L6X0</accession>
<gene>
    <name evidence="1" type="primary">nifH</name>
    <name type="ordered locus">Mmc1_1202</name>
</gene>
<organism>
    <name type="scientific">Magnetococcus marinus (strain ATCC BAA-1437 / JCM 17883 / MC-1)</name>
    <dbReference type="NCBI Taxonomy" id="156889"/>
    <lineage>
        <taxon>Bacteria</taxon>
        <taxon>Pseudomonadati</taxon>
        <taxon>Pseudomonadota</taxon>
        <taxon>Alphaproteobacteria</taxon>
        <taxon>Magnetococcales</taxon>
        <taxon>Magnetococcaceae</taxon>
        <taxon>Magnetococcus</taxon>
    </lineage>
</organism>
<name>NIFH_MAGMM</name>
<keyword id="KW-0004">4Fe-4S</keyword>
<keyword id="KW-0013">ADP-ribosylation</keyword>
<keyword id="KW-0067">ATP-binding</keyword>
<keyword id="KW-0408">Iron</keyword>
<keyword id="KW-0411">Iron-sulfur</keyword>
<keyword id="KW-0479">Metal-binding</keyword>
<keyword id="KW-0535">Nitrogen fixation</keyword>
<keyword id="KW-0547">Nucleotide-binding</keyword>
<keyword id="KW-0560">Oxidoreductase</keyword>
<keyword id="KW-1185">Reference proteome</keyword>
<proteinExistence type="inferred from homology"/>
<feature type="chain" id="PRO_1000211873" description="Nitrogenase iron protein">
    <location>
        <begin position="1"/>
        <end position="296"/>
    </location>
</feature>
<feature type="binding site" evidence="1">
    <location>
        <begin position="10"/>
        <end position="17"/>
    </location>
    <ligand>
        <name>ATP</name>
        <dbReference type="ChEBI" id="CHEBI:30616"/>
    </ligand>
</feature>
<feature type="binding site" evidence="1">
    <location>
        <position position="98"/>
    </location>
    <ligand>
        <name>[4Fe-4S] cluster</name>
        <dbReference type="ChEBI" id="CHEBI:49883"/>
        <note>ligand shared between dimeric partners</note>
    </ligand>
</feature>
<feature type="binding site" evidence="1">
    <location>
        <position position="133"/>
    </location>
    <ligand>
        <name>[4Fe-4S] cluster</name>
        <dbReference type="ChEBI" id="CHEBI:49883"/>
        <note>ligand shared between dimeric partners</note>
    </ligand>
</feature>
<feature type="modified residue" description="ADP-ribosylarginine; by dinitrogenase reductase ADP-ribosyltransferase" evidence="1">
    <location>
        <position position="101"/>
    </location>
</feature>
<protein>
    <recommendedName>
        <fullName evidence="1">Nitrogenase iron protein</fullName>
        <ecNumber evidence="1">1.18.6.1</ecNumber>
    </recommendedName>
    <alternativeName>
        <fullName evidence="1">Nitrogenase Fe protein</fullName>
    </alternativeName>
    <alternativeName>
        <fullName evidence="1">Nitrogenase component II</fullName>
    </alternativeName>
    <alternativeName>
        <fullName evidence="1">Nitrogenase reductase</fullName>
    </alternativeName>
</protein>